<gene>
    <name evidence="1" type="primary">dapB</name>
    <name type="ordered locus">Ccon26_01090</name>
    <name type="ORF">CCC13826_1138</name>
</gene>
<protein>
    <recommendedName>
        <fullName evidence="1">4-hydroxy-tetrahydrodipicolinate reductase</fullName>
        <shortName evidence="1">HTPA reductase</shortName>
        <ecNumber evidence="1">1.17.1.8</ecNumber>
    </recommendedName>
</protein>
<proteinExistence type="inferred from homology"/>
<accession>A7ZB70</accession>
<reference key="1">
    <citation type="submission" date="2007-10" db="EMBL/GenBank/DDBJ databases">
        <title>Genome sequence of Campylobacter concisus 13826 isolated from human feces.</title>
        <authorList>
            <person name="Fouts D.E."/>
            <person name="Mongodin E.F."/>
            <person name="Puiu D."/>
            <person name="Sebastian Y."/>
            <person name="Miller W.G."/>
            <person name="Mandrell R.E."/>
            <person name="On S."/>
            <person name="Nelson K.E."/>
        </authorList>
    </citation>
    <scope>NUCLEOTIDE SEQUENCE [LARGE SCALE GENOMIC DNA]</scope>
    <source>
        <strain>13826</strain>
    </source>
</reference>
<evidence type="ECO:0000255" key="1">
    <source>
        <dbReference type="HAMAP-Rule" id="MF_00102"/>
    </source>
</evidence>
<evidence type="ECO:0000305" key="2"/>
<organism>
    <name type="scientific">Campylobacter concisus (strain 13826)</name>
    <dbReference type="NCBI Taxonomy" id="360104"/>
    <lineage>
        <taxon>Bacteria</taxon>
        <taxon>Pseudomonadati</taxon>
        <taxon>Campylobacterota</taxon>
        <taxon>Epsilonproteobacteria</taxon>
        <taxon>Campylobacterales</taxon>
        <taxon>Campylobacteraceae</taxon>
        <taxon>Campylobacter</taxon>
    </lineage>
</organism>
<sequence>MVKIGLYGASGKMAQSIISCLKDEKDATLSVAFSQKNEVENLSSELLTNDFAKFFEACDVIIDFSQKEATVALLNYARTNPKPLVIGTTGLNDDEKNLLHLASGTMPILYATNMSLGVAVLNRIARIASKVLREFDIEIVEQHHRHKKDAPSGTAMTLAGCVAEARDLNLKDVLVTGRAGMVGARSKDEIAVMALRGGDVVGRHTVGFYNDGEFIELNHTATSRATFSKGAIKAAIWLKDQSSGLYSIDDSLGLDD</sequence>
<comment type="function">
    <text evidence="1">Catalyzes the conversion of 4-hydroxy-tetrahydrodipicolinate (HTPA) to tetrahydrodipicolinate.</text>
</comment>
<comment type="catalytic activity">
    <reaction evidence="1">
        <text>(S)-2,3,4,5-tetrahydrodipicolinate + NAD(+) + H2O = (2S,4S)-4-hydroxy-2,3,4,5-tetrahydrodipicolinate + NADH + H(+)</text>
        <dbReference type="Rhea" id="RHEA:35323"/>
        <dbReference type="ChEBI" id="CHEBI:15377"/>
        <dbReference type="ChEBI" id="CHEBI:15378"/>
        <dbReference type="ChEBI" id="CHEBI:16845"/>
        <dbReference type="ChEBI" id="CHEBI:57540"/>
        <dbReference type="ChEBI" id="CHEBI:57945"/>
        <dbReference type="ChEBI" id="CHEBI:67139"/>
        <dbReference type="EC" id="1.17.1.8"/>
    </reaction>
</comment>
<comment type="catalytic activity">
    <reaction evidence="1">
        <text>(S)-2,3,4,5-tetrahydrodipicolinate + NADP(+) + H2O = (2S,4S)-4-hydroxy-2,3,4,5-tetrahydrodipicolinate + NADPH + H(+)</text>
        <dbReference type="Rhea" id="RHEA:35331"/>
        <dbReference type="ChEBI" id="CHEBI:15377"/>
        <dbReference type="ChEBI" id="CHEBI:15378"/>
        <dbReference type="ChEBI" id="CHEBI:16845"/>
        <dbReference type="ChEBI" id="CHEBI:57783"/>
        <dbReference type="ChEBI" id="CHEBI:58349"/>
        <dbReference type="ChEBI" id="CHEBI:67139"/>
        <dbReference type="EC" id="1.17.1.8"/>
    </reaction>
</comment>
<comment type="pathway">
    <text evidence="1">Amino-acid biosynthesis; L-lysine biosynthesis via DAP pathway; (S)-tetrahydrodipicolinate from L-aspartate: step 4/4.</text>
</comment>
<comment type="subcellular location">
    <subcellularLocation>
        <location evidence="1">Cytoplasm</location>
    </subcellularLocation>
</comment>
<comment type="similarity">
    <text evidence="1">Belongs to the DapB family.</text>
</comment>
<comment type="caution">
    <text evidence="2">Was originally thought to be a dihydrodipicolinate reductase (DHDPR), catalyzing the conversion of dihydrodipicolinate to tetrahydrodipicolinate. However, it was shown in E.coli that the substrate of the enzymatic reaction is not dihydrodipicolinate (DHDP) but in fact (2S,4S)-4-hydroxy-2,3,4,5-tetrahydrodipicolinic acid (HTPA), the product released by the DapA-catalyzed reaction.</text>
</comment>
<keyword id="KW-0028">Amino-acid biosynthesis</keyword>
<keyword id="KW-0963">Cytoplasm</keyword>
<keyword id="KW-0220">Diaminopimelate biosynthesis</keyword>
<keyword id="KW-0457">Lysine biosynthesis</keyword>
<keyword id="KW-0520">NAD</keyword>
<keyword id="KW-0521">NADP</keyword>
<keyword id="KW-0560">Oxidoreductase</keyword>
<feature type="chain" id="PRO_1000008549" description="4-hydroxy-tetrahydrodipicolinate reductase">
    <location>
        <begin position="1"/>
        <end position="256"/>
    </location>
</feature>
<feature type="active site" description="Proton donor/acceptor" evidence="1">
    <location>
        <position position="143"/>
    </location>
</feature>
<feature type="active site" description="Proton donor" evidence="1">
    <location>
        <position position="147"/>
    </location>
</feature>
<feature type="binding site" evidence="1">
    <location>
        <begin position="8"/>
        <end position="13"/>
    </location>
    <ligand>
        <name>NAD(+)</name>
        <dbReference type="ChEBI" id="CHEBI:57540"/>
    </ligand>
</feature>
<feature type="binding site" evidence="1">
    <location>
        <position position="36"/>
    </location>
    <ligand>
        <name>NADP(+)</name>
        <dbReference type="ChEBI" id="CHEBI:58349"/>
    </ligand>
</feature>
<feature type="binding site" evidence="1">
    <location>
        <begin position="87"/>
        <end position="89"/>
    </location>
    <ligand>
        <name>NAD(+)</name>
        <dbReference type="ChEBI" id="CHEBI:57540"/>
    </ligand>
</feature>
<feature type="binding site" evidence="1">
    <location>
        <begin position="111"/>
        <end position="114"/>
    </location>
    <ligand>
        <name>NAD(+)</name>
        <dbReference type="ChEBI" id="CHEBI:57540"/>
    </ligand>
</feature>
<feature type="binding site" evidence="1">
    <location>
        <position position="144"/>
    </location>
    <ligand>
        <name>(S)-2,3,4,5-tetrahydrodipicolinate</name>
        <dbReference type="ChEBI" id="CHEBI:16845"/>
    </ligand>
</feature>
<feature type="binding site" evidence="1">
    <location>
        <begin position="153"/>
        <end position="154"/>
    </location>
    <ligand>
        <name>(S)-2,3,4,5-tetrahydrodipicolinate</name>
        <dbReference type="ChEBI" id="CHEBI:16845"/>
    </ligand>
</feature>
<name>DAPB_CAMC1</name>
<dbReference type="EC" id="1.17.1.8" evidence="1"/>
<dbReference type="EMBL" id="CP000792">
    <property type="protein sequence ID" value="EAT98559.1"/>
    <property type="molecule type" value="Genomic_DNA"/>
</dbReference>
<dbReference type="RefSeq" id="WP_012001050.1">
    <property type="nucleotide sequence ID" value="NC_009802.2"/>
</dbReference>
<dbReference type="SMR" id="A7ZB70"/>
<dbReference type="STRING" id="360104.CCC13826_1138"/>
<dbReference type="KEGG" id="cco:CCC13826_1138"/>
<dbReference type="eggNOG" id="COG0289">
    <property type="taxonomic scope" value="Bacteria"/>
</dbReference>
<dbReference type="HOGENOM" id="CLU_047479_2_1_7"/>
<dbReference type="OrthoDB" id="9790352at2"/>
<dbReference type="UniPathway" id="UPA00034">
    <property type="reaction ID" value="UER00018"/>
</dbReference>
<dbReference type="Proteomes" id="UP000001121">
    <property type="component" value="Chromosome"/>
</dbReference>
<dbReference type="GO" id="GO:0005829">
    <property type="term" value="C:cytosol"/>
    <property type="evidence" value="ECO:0007669"/>
    <property type="project" value="TreeGrafter"/>
</dbReference>
<dbReference type="GO" id="GO:0008839">
    <property type="term" value="F:4-hydroxy-tetrahydrodipicolinate reductase"/>
    <property type="evidence" value="ECO:0007669"/>
    <property type="project" value="UniProtKB-EC"/>
</dbReference>
<dbReference type="GO" id="GO:0051287">
    <property type="term" value="F:NAD binding"/>
    <property type="evidence" value="ECO:0007669"/>
    <property type="project" value="UniProtKB-UniRule"/>
</dbReference>
<dbReference type="GO" id="GO:0050661">
    <property type="term" value="F:NADP binding"/>
    <property type="evidence" value="ECO:0007669"/>
    <property type="project" value="UniProtKB-UniRule"/>
</dbReference>
<dbReference type="GO" id="GO:0016726">
    <property type="term" value="F:oxidoreductase activity, acting on CH or CH2 groups, NAD or NADP as acceptor"/>
    <property type="evidence" value="ECO:0007669"/>
    <property type="project" value="UniProtKB-UniRule"/>
</dbReference>
<dbReference type="GO" id="GO:0019877">
    <property type="term" value="P:diaminopimelate biosynthetic process"/>
    <property type="evidence" value="ECO:0007669"/>
    <property type="project" value="UniProtKB-UniRule"/>
</dbReference>
<dbReference type="GO" id="GO:0009089">
    <property type="term" value="P:lysine biosynthetic process via diaminopimelate"/>
    <property type="evidence" value="ECO:0007669"/>
    <property type="project" value="UniProtKB-UniRule"/>
</dbReference>
<dbReference type="CDD" id="cd02274">
    <property type="entry name" value="DHDPR_N"/>
    <property type="match status" value="1"/>
</dbReference>
<dbReference type="FunFam" id="3.30.360.10:FF:000004">
    <property type="entry name" value="4-hydroxy-tetrahydrodipicolinate reductase"/>
    <property type="match status" value="1"/>
</dbReference>
<dbReference type="Gene3D" id="3.30.360.10">
    <property type="entry name" value="Dihydrodipicolinate Reductase, domain 2"/>
    <property type="match status" value="1"/>
</dbReference>
<dbReference type="Gene3D" id="3.40.50.720">
    <property type="entry name" value="NAD(P)-binding Rossmann-like Domain"/>
    <property type="match status" value="1"/>
</dbReference>
<dbReference type="HAMAP" id="MF_00102">
    <property type="entry name" value="DapB"/>
    <property type="match status" value="1"/>
</dbReference>
<dbReference type="InterPro" id="IPR022663">
    <property type="entry name" value="DapB_C"/>
</dbReference>
<dbReference type="InterPro" id="IPR000846">
    <property type="entry name" value="DapB_N"/>
</dbReference>
<dbReference type="InterPro" id="IPR022664">
    <property type="entry name" value="DapB_N_CS"/>
</dbReference>
<dbReference type="InterPro" id="IPR023940">
    <property type="entry name" value="DHDPR_bac"/>
</dbReference>
<dbReference type="InterPro" id="IPR036291">
    <property type="entry name" value="NAD(P)-bd_dom_sf"/>
</dbReference>
<dbReference type="NCBIfam" id="TIGR00036">
    <property type="entry name" value="dapB"/>
    <property type="match status" value="1"/>
</dbReference>
<dbReference type="PANTHER" id="PTHR20836:SF0">
    <property type="entry name" value="4-HYDROXY-TETRAHYDRODIPICOLINATE REDUCTASE 1, CHLOROPLASTIC-RELATED"/>
    <property type="match status" value="1"/>
</dbReference>
<dbReference type="PANTHER" id="PTHR20836">
    <property type="entry name" value="DIHYDRODIPICOLINATE REDUCTASE"/>
    <property type="match status" value="1"/>
</dbReference>
<dbReference type="Pfam" id="PF05173">
    <property type="entry name" value="DapB_C"/>
    <property type="match status" value="1"/>
</dbReference>
<dbReference type="Pfam" id="PF01113">
    <property type="entry name" value="DapB_N"/>
    <property type="match status" value="1"/>
</dbReference>
<dbReference type="PIRSF" id="PIRSF000161">
    <property type="entry name" value="DHPR"/>
    <property type="match status" value="1"/>
</dbReference>
<dbReference type="SUPFAM" id="SSF55347">
    <property type="entry name" value="Glyceraldehyde-3-phosphate dehydrogenase-like, C-terminal domain"/>
    <property type="match status" value="1"/>
</dbReference>
<dbReference type="SUPFAM" id="SSF51735">
    <property type="entry name" value="NAD(P)-binding Rossmann-fold domains"/>
    <property type="match status" value="1"/>
</dbReference>
<dbReference type="PROSITE" id="PS01298">
    <property type="entry name" value="DAPB"/>
    <property type="match status" value="1"/>
</dbReference>